<reference key="1">
    <citation type="journal article" date="1988" name="Gene">
        <title>Transcriptional regulation and gene arrangement of Escherichia coli, Citrobacter freundii and Salmonella typhimurium biotin operons.</title>
        <authorList>
            <person name="Shiuan D."/>
            <person name="Campbell A."/>
        </authorList>
    </citation>
    <scope>NUCLEOTIDE SEQUENCE [GENOMIC DNA]</scope>
</reference>
<dbReference type="EC" id="2.6.1.62"/>
<dbReference type="EMBL" id="M21922">
    <property type="status" value="NOT_ANNOTATED_CDS"/>
    <property type="molecule type" value="Genomic_DNA"/>
</dbReference>
<dbReference type="PIR" id="I40697">
    <property type="entry name" value="I40697"/>
</dbReference>
<dbReference type="UniPathway" id="UPA00078">
    <property type="reaction ID" value="UER00160"/>
</dbReference>
<dbReference type="GO" id="GO:0005737">
    <property type="term" value="C:cytoplasm"/>
    <property type="evidence" value="ECO:0007669"/>
    <property type="project" value="UniProtKB-SubCell"/>
</dbReference>
<dbReference type="GO" id="GO:0004015">
    <property type="term" value="F:adenosylmethionine-8-amino-7-oxononanoate transaminase activity"/>
    <property type="evidence" value="ECO:0007669"/>
    <property type="project" value="UniProtKB-EC"/>
</dbReference>
<dbReference type="GO" id="GO:0009102">
    <property type="term" value="P:biotin biosynthetic process"/>
    <property type="evidence" value="ECO:0007669"/>
    <property type="project" value="UniProtKB-UniPathway"/>
</dbReference>
<gene>
    <name type="primary">bioA</name>
</gene>
<sequence length="5" mass="582">MTTDD</sequence>
<accession>P13071</accession>
<comment type="function">
    <text evidence="1">Catalyzes the transfer of the alpha-amino group from S-adenosyl-L-methionine (SAM) to 7-keto-8-aminopelargonic acid (KAPA) to form 7,8-diaminopelargonic acid (DAPA). It is the only aminotransferase known to utilize SAM as an amino donor (By similarity).</text>
</comment>
<comment type="catalytic activity">
    <reaction>
        <text>(8S)-8-amino-7-oxononanoate + S-adenosyl-L-methionine = S-adenosyl-4-methylsulfanyl-2-oxobutanoate + (7R,8S)-7,8-diammoniononanoate</text>
        <dbReference type="Rhea" id="RHEA:16861"/>
        <dbReference type="ChEBI" id="CHEBI:16490"/>
        <dbReference type="ChEBI" id="CHEBI:59789"/>
        <dbReference type="ChEBI" id="CHEBI:149468"/>
        <dbReference type="ChEBI" id="CHEBI:149469"/>
        <dbReference type="EC" id="2.6.1.62"/>
    </reaction>
</comment>
<comment type="cofactor">
    <cofactor evidence="1">
        <name>pyridoxal 5'-phosphate</name>
        <dbReference type="ChEBI" id="CHEBI:597326"/>
    </cofactor>
</comment>
<comment type="pathway">
    <text>Cofactor biosynthesis; biotin biosynthesis; 7,8-diaminononanoate from 8-amino-7-oxononanoate (SAM route): step 1/1.</text>
</comment>
<comment type="subunit">
    <text evidence="1">Homodimer.</text>
</comment>
<comment type="subcellular location">
    <subcellularLocation>
        <location evidence="1">Cytoplasm</location>
    </subcellularLocation>
</comment>
<comment type="similarity">
    <text evidence="2">Belongs to the class-III pyridoxal-phosphate-dependent aminotransferase family. BioA subfamily.</text>
</comment>
<evidence type="ECO:0000250" key="1"/>
<evidence type="ECO:0000305" key="2"/>
<protein>
    <recommendedName>
        <fullName>Adenosylmethionine-8-amino-7-oxononanoate aminotransferase</fullName>
        <ecNumber>2.6.1.62</ecNumber>
    </recommendedName>
    <alternativeName>
        <fullName>7,8-diamino-pelargonic acid aminotransferase</fullName>
        <shortName>DAPA AT</shortName>
        <shortName>DAPA aminotransferase</shortName>
    </alternativeName>
    <alternativeName>
        <fullName>Diaminopelargonic acid synthase</fullName>
    </alternativeName>
</protein>
<proteinExistence type="inferred from homology"/>
<feature type="chain" id="PRO_0000120367" description="Adenosylmethionine-8-amino-7-oxononanoate aminotransferase">
    <location>
        <begin position="1"/>
        <end position="5" status="greater than"/>
    </location>
</feature>
<feature type="non-terminal residue">
    <location>
        <position position="5"/>
    </location>
</feature>
<keyword id="KW-0032">Aminotransferase</keyword>
<keyword id="KW-0093">Biotin biosynthesis</keyword>
<keyword id="KW-0963">Cytoplasm</keyword>
<keyword id="KW-0663">Pyridoxal phosphate</keyword>
<keyword id="KW-0949">S-adenosyl-L-methionine</keyword>
<keyword id="KW-0808">Transferase</keyword>
<name>BIOA_CITFR</name>
<organism>
    <name type="scientific">Citrobacter freundii</name>
    <dbReference type="NCBI Taxonomy" id="546"/>
    <lineage>
        <taxon>Bacteria</taxon>
        <taxon>Pseudomonadati</taxon>
        <taxon>Pseudomonadota</taxon>
        <taxon>Gammaproteobacteria</taxon>
        <taxon>Enterobacterales</taxon>
        <taxon>Enterobacteriaceae</taxon>
        <taxon>Citrobacter</taxon>
        <taxon>Citrobacter freundii complex</taxon>
    </lineage>
</organism>